<protein>
    <recommendedName>
        <fullName>Protein-glutamine gamma-glutamyltransferase K</fullName>
        <ecNumber>2.3.2.13</ecNumber>
    </recommendedName>
    <alternativeName>
        <fullName>Epidermal TGase</fullName>
    </alternativeName>
    <alternativeName>
        <fullName>Transglutaminase K</fullName>
        <shortName>TG(K)</shortName>
        <shortName>TGK</shortName>
        <shortName>TGase K</shortName>
    </alternativeName>
    <alternativeName>
        <fullName>Transglutaminase-1</fullName>
        <shortName>TGase-1</shortName>
    </alternativeName>
</protein>
<sequence length="815" mass="89826">MEGPRSDVGRWGRSPWQPPTTPSPEPEPEPEPDRRSRSRRGGGRSFWARCCGCCSCGNRGDDDWGPEPSGSRSRGTSSRGRDSRGGRRPESRGSGVNAAGDGTIREGMLVVTGVDLLCSRSDQNRREHHTDEFEYDELIVRRGQPFHMILFLNREYESSDRIALELLIGSNPEVGKGTHVIIPVGKGGSGGWKAQVTKNNGHNLNLRVHTSPNAIIGKFQFTVRTRSEAGEFQLPFDPRNEIYILFNPWCPEDIVYVDHEDWRQEYVLNESGRIYYGTEAQIGERTWNYGQFDHGVLDACLYILDRRGMPYGGRGDPVSVSRVVSAMVNSLDDNGVLIGNWTGDYSRGTNPSAWVGSVEILLSYLRTGYSVPYGQCWVFAGVTTTVLRCLGFATRTVTNFNSAHDTDTSLTMDIYFDENMKPLEHLNHDSVWNFHVWNDCWMKRPDLPSGFDGWQVVDATPQETSSGIFCCGPCSVESVKNGLVYMKYDTPFIFAEVNSDKVYWQRQDDGSFKIVYVEEKAIGTLIVTKAIHSNNREDITHIYKHPEGSEAERRAVEKAAAHGSKPNVYATRDSAEDVAMQVEAQDAVMGQDLAVSVVLTNRGSSRRTVKLHLYLCVTYYTGVSGPTFKEAKKEVTLAPGASDSVTMPVAYKEYKPHLVDQGAMLLNVSGHVKESGQVLAKQHTFRLRTPDLSLTLLGAAVVGQECGVQIVFKNPLPVTLTNVVFRLEGSGLQRPKVLNVGDIGGNETVTLRQTFVPVRPGPRQLIASLDSPQLSQVHGVIQVDVAPASGGSGFSDAGGDSRSGENIPMAYRGGA</sequence>
<comment type="function">
    <text evidence="2">Catalyzes the cross-linking of proteins and the conjugation of polyamines to proteins. Responsible for cross-linking epidermal proteins during formation of the stratum corneum. Involved in cell proliferation (By similarity).</text>
</comment>
<comment type="catalytic activity">
    <reaction evidence="4">
        <text>L-glutaminyl-[protein] + L-lysyl-[protein] = [protein]-L-lysyl-N(6)-5-L-glutamyl-[protein] + NH4(+)</text>
        <dbReference type="Rhea" id="RHEA:54816"/>
        <dbReference type="Rhea" id="RHEA-COMP:9752"/>
        <dbReference type="Rhea" id="RHEA-COMP:10207"/>
        <dbReference type="Rhea" id="RHEA-COMP:14005"/>
        <dbReference type="ChEBI" id="CHEBI:28938"/>
        <dbReference type="ChEBI" id="CHEBI:29969"/>
        <dbReference type="ChEBI" id="CHEBI:30011"/>
        <dbReference type="ChEBI" id="CHEBI:138370"/>
        <dbReference type="EC" id="2.3.2.13"/>
    </reaction>
</comment>
<comment type="cofactor">
    <cofactor evidence="1">
        <name>Ca(2+)</name>
        <dbReference type="ChEBI" id="CHEBI:29108"/>
    </cofactor>
    <text evidence="1">Binds 1 Ca(2+) ion per subunit.</text>
</comment>
<comment type="subunit">
    <text evidence="2">Interacts with PLAAT4.</text>
</comment>
<comment type="subcellular location">
    <subcellularLocation>
        <location evidence="2">Membrane</location>
        <topology evidence="2">Lipid-anchor</topology>
    </subcellularLocation>
</comment>
<comment type="tissue specificity">
    <text evidence="6">Expressed in large amounts in epithelial tissues (lung, liver and kidney).</text>
</comment>
<comment type="PTM">
    <text evidence="6">Tyrosine-phosphorylated.</text>
</comment>
<comment type="PTM">
    <text evidence="2">Palmitoylated.</text>
</comment>
<comment type="PTM">
    <text evidence="2">The membrane anchorage region possesses a cluster of five cysteines within which fatty acid(s) may become thioester-linked. It is subject to phorbol ester-stimulated phosphorylation and is hypersensitive to proteolysis, which releases the enzyme in a soluble form.</text>
</comment>
<comment type="similarity">
    <text evidence="7">Belongs to the transglutaminase superfamily. Transglutaminase family.</text>
</comment>
<feature type="chain" id="PRO_0000213702" description="Protein-glutamine gamma-glutamyltransferase K">
    <location>
        <begin position="1"/>
        <end position="815"/>
    </location>
</feature>
<feature type="region of interest" description="Disordered" evidence="5">
    <location>
        <begin position="1"/>
        <end position="48"/>
    </location>
</feature>
<feature type="region of interest" description="Disordered" evidence="5">
    <location>
        <begin position="62"/>
        <end position="101"/>
    </location>
</feature>
<feature type="region of interest" description="Disordered" evidence="5">
    <location>
        <begin position="791"/>
        <end position="815"/>
    </location>
</feature>
<feature type="compositionally biased region" description="Basic and acidic residues" evidence="5">
    <location>
        <begin position="1"/>
        <end position="10"/>
    </location>
</feature>
<feature type="compositionally biased region" description="Pro residues" evidence="5">
    <location>
        <begin position="16"/>
        <end position="25"/>
    </location>
</feature>
<feature type="compositionally biased region" description="Low complexity" evidence="5">
    <location>
        <begin position="66"/>
        <end position="78"/>
    </location>
</feature>
<feature type="compositionally biased region" description="Basic and acidic residues" evidence="5">
    <location>
        <begin position="79"/>
        <end position="91"/>
    </location>
</feature>
<feature type="active site" evidence="4">
    <location>
        <position position="376"/>
    </location>
</feature>
<feature type="active site" evidence="4">
    <location>
        <position position="435"/>
    </location>
</feature>
<feature type="active site" evidence="4">
    <location>
        <position position="458"/>
    </location>
</feature>
<feature type="binding site" evidence="1">
    <location>
        <position position="498"/>
    </location>
    <ligand>
        <name>Ca(2+)</name>
        <dbReference type="ChEBI" id="CHEBI:29108"/>
    </ligand>
</feature>
<feature type="binding site" evidence="1">
    <location>
        <position position="500"/>
    </location>
    <ligand>
        <name>Ca(2+)</name>
        <dbReference type="ChEBI" id="CHEBI:29108"/>
    </ligand>
</feature>
<feature type="binding site" evidence="1">
    <location>
        <position position="547"/>
    </location>
    <ligand>
        <name>Ca(2+)</name>
        <dbReference type="ChEBI" id="CHEBI:29108"/>
    </ligand>
</feature>
<feature type="binding site" evidence="1">
    <location>
        <position position="552"/>
    </location>
    <ligand>
        <name>Ca(2+)</name>
        <dbReference type="ChEBI" id="CHEBI:29108"/>
    </ligand>
</feature>
<feature type="modified residue" description="Phosphothreonine" evidence="10">
    <location>
        <position position="21"/>
    </location>
</feature>
<feature type="modified residue" description="Phosphoserine" evidence="10">
    <location>
        <position position="23"/>
    </location>
</feature>
<feature type="modified residue" description="Phosphoserine" evidence="3">
    <location>
        <position position="71"/>
    </location>
</feature>
<feature type="modified residue" description="Phosphoserine" evidence="2">
    <location>
        <position position="83"/>
    </location>
</feature>
<feature type="modified residue" description="Phosphoserine" evidence="8">
    <location>
        <position position="91"/>
    </location>
</feature>
<feature type="modified residue" description="Phosphoserine" evidence="8 9">
    <location>
        <position position="94"/>
    </location>
</feature>
<feature type="modified residue" description="Phosphoserine" evidence="8 10">
    <location>
        <position position="803"/>
    </location>
</feature>
<feature type="sequence conflict" description="In Ref. 1; AAF35986." evidence="7" ref="1">
    <original>E</original>
    <variation>V</variation>
    <location>
        <position position="29"/>
    </location>
</feature>
<dbReference type="EC" id="2.3.2.13"/>
<dbReference type="EMBL" id="AF186373">
    <property type="protein sequence ID" value="AAF35986.1"/>
    <property type="molecule type" value="mRNA"/>
</dbReference>
<dbReference type="EMBL" id="BC026422">
    <property type="protein sequence ID" value="AAH26422.1"/>
    <property type="molecule type" value="mRNA"/>
</dbReference>
<dbReference type="CCDS" id="CCDS36932.1"/>
<dbReference type="RefSeq" id="NP_001155186.1">
    <property type="nucleotide sequence ID" value="NM_001161714.1"/>
</dbReference>
<dbReference type="RefSeq" id="NP_001155187.1">
    <property type="nucleotide sequence ID" value="NM_001161715.1"/>
</dbReference>
<dbReference type="RefSeq" id="NP_064368.3">
    <property type="nucleotide sequence ID" value="NM_019984.3"/>
</dbReference>
<dbReference type="RefSeq" id="XP_006518871.1">
    <property type="nucleotide sequence ID" value="XM_006518808.2"/>
</dbReference>
<dbReference type="RefSeq" id="XP_006518872.1">
    <property type="nucleotide sequence ID" value="XM_006518809.3"/>
</dbReference>
<dbReference type="SMR" id="Q9JLF6"/>
<dbReference type="BioGRID" id="204167">
    <property type="interactions" value="4"/>
</dbReference>
<dbReference type="FunCoup" id="Q9JLF6">
    <property type="interactions" value="54"/>
</dbReference>
<dbReference type="IntAct" id="Q9JLF6">
    <property type="interactions" value="2"/>
</dbReference>
<dbReference type="MINT" id="Q9JLF6"/>
<dbReference type="STRING" id="10090.ENSMUSP00000128090"/>
<dbReference type="GlyGen" id="Q9JLF6">
    <property type="glycosylation" value="1 site, 1 O-linked glycan (1 site)"/>
</dbReference>
<dbReference type="iPTMnet" id="Q9JLF6"/>
<dbReference type="PhosphoSitePlus" id="Q9JLF6"/>
<dbReference type="SwissPalm" id="Q9JLF6"/>
<dbReference type="jPOST" id="Q9JLF6"/>
<dbReference type="PaxDb" id="10090-ENSMUSP00000128090"/>
<dbReference type="PeptideAtlas" id="Q9JLF6"/>
<dbReference type="ProteomicsDB" id="263052"/>
<dbReference type="Pumba" id="Q9JLF6"/>
<dbReference type="DNASU" id="21816"/>
<dbReference type="GeneID" id="21816"/>
<dbReference type="KEGG" id="mmu:21816"/>
<dbReference type="UCSC" id="uc007uag.2">
    <property type="organism name" value="mouse"/>
</dbReference>
<dbReference type="AGR" id="MGI:98730"/>
<dbReference type="CTD" id="7051"/>
<dbReference type="MGI" id="MGI:98730">
    <property type="gene designation" value="Tgm1"/>
</dbReference>
<dbReference type="eggNOG" id="ENOG502QQ46">
    <property type="taxonomic scope" value="Eukaryota"/>
</dbReference>
<dbReference type="InParanoid" id="Q9JLF6"/>
<dbReference type="OrthoDB" id="437511at2759"/>
<dbReference type="PhylomeDB" id="Q9JLF6"/>
<dbReference type="TreeFam" id="TF324278"/>
<dbReference type="BRENDA" id="2.3.2.13">
    <property type="organism ID" value="3474"/>
</dbReference>
<dbReference type="Reactome" id="R-MMU-6809371">
    <property type="pathway name" value="Formation of the cornified envelope"/>
</dbReference>
<dbReference type="BioGRID-ORCS" id="21816">
    <property type="hits" value="0 hits in 77 CRISPR screens"/>
</dbReference>
<dbReference type="ChiTaRS" id="Tgm1">
    <property type="organism name" value="mouse"/>
</dbReference>
<dbReference type="PRO" id="PR:Q9JLF6"/>
<dbReference type="Proteomes" id="UP000000589">
    <property type="component" value="Unplaced"/>
</dbReference>
<dbReference type="RNAct" id="Q9JLF6">
    <property type="molecule type" value="protein"/>
</dbReference>
<dbReference type="GO" id="GO:0005912">
    <property type="term" value="C:adherens junction"/>
    <property type="evidence" value="ECO:0000314"/>
    <property type="project" value="MGI"/>
</dbReference>
<dbReference type="GO" id="GO:0016020">
    <property type="term" value="C:membrane"/>
    <property type="evidence" value="ECO:0000250"/>
    <property type="project" value="UniProtKB"/>
</dbReference>
<dbReference type="GO" id="GO:0046872">
    <property type="term" value="F:metal ion binding"/>
    <property type="evidence" value="ECO:0007669"/>
    <property type="project" value="UniProtKB-KW"/>
</dbReference>
<dbReference type="GO" id="GO:0003810">
    <property type="term" value="F:protein-glutamine gamma-glutamyltransferase activity"/>
    <property type="evidence" value="ECO:0007669"/>
    <property type="project" value="UniProtKB-EC"/>
</dbReference>
<dbReference type="GO" id="GO:0009887">
    <property type="term" value="P:animal organ morphogenesis"/>
    <property type="evidence" value="ECO:0000315"/>
    <property type="project" value="MGI"/>
</dbReference>
<dbReference type="GO" id="GO:0031424">
    <property type="term" value="P:keratinization"/>
    <property type="evidence" value="ECO:0007669"/>
    <property type="project" value="UniProtKB-KW"/>
</dbReference>
<dbReference type="GO" id="GO:0045787">
    <property type="term" value="P:positive regulation of cell cycle"/>
    <property type="evidence" value="ECO:0000250"/>
    <property type="project" value="UniProtKB"/>
</dbReference>
<dbReference type="GO" id="GO:0010838">
    <property type="term" value="P:positive regulation of keratinocyte proliferation"/>
    <property type="evidence" value="ECO:0000250"/>
    <property type="project" value="UniProtKB"/>
</dbReference>
<dbReference type="FunFam" id="2.60.40.10:FF:000090">
    <property type="entry name" value="Protein-glutamine gamma-glutamyltransferase 2"/>
    <property type="match status" value="1"/>
</dbReference>
<dbReference type="FunFam" id="3.90.260.10:FF:000001">
    <property type="entry name" value="Protein-glutamine gamma-glutamyltransferase 2"/>
    <property type="match status" value="1"/>
</dbReference>
<dbReference type="FunFam" id="2.60.40.10:FF:000171">
    <property type="entry name" value="protein-glutamine gamma-glutamyltransferase 6"/>
    <property type="match status" value="1"/>
</dbReference>
<dbReference type="FunFam" id="2.60.40.10:FF:001143">
    <property type="entry name" value="Protein-glutamine gamma-glutamyltransferase K"/>
    <property type="match status" value="1"/>
</dbReference>
<dbReference type="Gene3D" id="2.60.40.10">
    <property type="entry name" value="Immunoglobulins"/>
    <property type="match status" value="3"/>
</dbReference>
<dbReference type="Gene3D" id="3.90.260.10">
    <property type="entry name" value="Transglutaminase-like"/>
    <property type="match status" value="1"/>
</dbReference>
<dbReference type="InterPro" id="IPR013783">
    <property type="entry name" value="Ig-like_fold"/>
</dbReference>
<dbReference type="InterPro" id="IPR014756">
    <property type="entry name" value="Ig_E-set"/>
</dbReference>
<dbReference type="InterPro" id="IPR038765">
    <property type="entry name" value="Papain-like_cys_pep_sf"/>
</dbReference>
<dbReference type="InterPro" id="IPR050779">
    <property type="entry name" value="Transglutaminase"/>
</dbReference>
<dbReference type="InterPro" id="IPR002931">
    <property type="entry name" value="Transglutaminase-like"/>
</dbReference>
<dbReference type="InterPro" id="IPR036985">
    <property type="entry name" value="Transglutaminase-like_sf"/>
</dbReference>
<dbReference type="InterPro" id="IPR023608">
    <property type="entry name" value="Transglutaminase_animal"/>
</dbReference>
<dbReference type="InterPro" id="IPR013808">
    <property type="entry name" value="Transglutaminase_AS"/>
</dbReference>
<dbReference type="InterPro" id="IPR008958">
    <property type="entry name" value="Transglutaminase_C"/>
</dbReference>
<dbReference type="InterPro" id="IPR036238">
    <property type="entry name" value="Transglutaminase_C_sf"/>
</dbReference>
<dbReference type="InterPro" id="IPR001102">
    <property type="entry name" value="Transglutaminase_N"/>
</dbReference>
<dbReference type="PANTHER" id="PTHR11590">
    <property type="entry name" value="PROTEIN-GLUTAMINE GAMMA-GLUTAMYLTRANSFERASE"/>
    <property type="match status" value="1"/>
</dbReference>
<dbReference type="PANTHER" id="PTHR11590:SF49">
    <property type="entry name" value="PROTEIN-GLUTAMINE GAMMA-GLUTAMYLTRANSFERASE K"/>
    <property type="match status" value="1"/>
</dbReference>
<dbReference type="Pfam" id="PF00927">
    <property type="entry name" value="Transglut_C"/>
    <property type="match status" value="2"/>
</dbReference>
<dbReference type="Pfam" id="PF01841">
    <property type="entry name" value="Transglut_core"/>
    <property type="match status" value="1"/>
</dbReference>
<dbReference type="Pfam" id="PF00868">
    <property type="entry name" value="Transglut_N"/>
    <property type="match status" value="1"/>
</dbReference>
<dbReference type="PIRSF" id="PIRSF000459">
    <property type="entry name" value="TGM_EBP42"/>
    <property type="match status" value="1"/>
</dbReference>
<dbReference type="SMART" id="SM00460">
    <property type="entry name" value="TGc"/>
    <property type="match status" value="1"/>
</dbReference>
<dbReference type="SUPFAM" id="SSF54001">
    <property type="entry name" value="Cysteine proteinases"/>
    <property type="match status" value="1"/>
</dbReference>
<dbReference type="SUPFAM" id="SSF81296">
    <property type="entry name" value="E set domains"/>
    <property type="match status" value="1"/>
</dbReference>
<dbReference type="SUPFAM" id="SSF49309">
    <property type="entry name" value="Transglutaminase, two C-terminal domains"/>
    <property type="match status" value="2"/>
</dbReference>
<dbReference type="PROSITE" id="PS00547">
    <property type="entry name" value="TRANSGLUTAMINASES"/>
    <property type="match status" value="1"/>
</dbReference>
<reference key="1">
    <citation type="journal article" date="1999" name="J. Biol. Chem.">
        <title>Transglutaminase type 1 and its cross-linking activity are concentrated at adherens junctions in simple epithelial cells.</title>
        <authorList>
            <person name="Hiiragi T."/>
            <person name="Sasaki H."/>
            <person name="Nagafuchi A."/>
            <person name="Sabe H."/>
            <person name="Shen S.C."/>
            <person name="Matsuki M."/>
            <person name="Yamanishi K."/>
            <person name="Tsukita S."/>
        </authorList>
    </citation>
    <scope>NUCLEOTIDE SEQUENCE [MRNA]</scope>
    <scope>PHOSPHORYLATION</scope>
    <scope>TISSUE SPECIFICITY</scope>
</reference>
<reference key="2">
    <citation type="journal article" date="2004" name="Genome Res.">
        <title>The status, quality, and expansion of the NIH full-length cDNA project: the Mammalian Gene Collection (MGC).</title>
        <authorList>
            <consortium name="The MGC Project Team"/>
        </authorList>
    </citation>
    <scope>NUCLEOTIDE SEQUENCE [LARGE SCALE MRNA]</scope>
    <source>
        <strain>FVB/N</strain>
        <tissue>Kidney</tissue>
    </source>
</reference>
<reference key="3">
    <citation type="journal article" date="2007" name="Proc. Natl. Acad. Sci. U.S.A.">
        <title>Large-scale phosphorylation analysis of mouse liver.</title>
        <authorList>
            <person name="Villen J."/>
            <person name="Beausoleil S.A."/>
            <person name="Gerber S.A."/>
            <person name="Gygi S.P."/>
        </authorList>
    </citation>
    <scope>PHOSPHORYLATION [LARGE SCALE ANALYSIS] AT SER-91; SER-94 AND SER-803</scope>
    <scope>IDENTIFICATION BY MASS SPECTROMETRY [LARGE SCALE ANALYSIS]</scope>
    <source>
        <tissue>Liver</tissue>
    </source>
</reference>
<reference key="4">
    <citation type="journal article" date="2008" name="J. Proteome Res.">
        <title>Specific phosphopeptide enrichment with immobilized titanium ion affinity chromatography adsorbent for phosphoproteome analysis.</title>
        <authorList>
            <person name="Zhou H."/>
            <person name="Ye M."/>
            <person name="Dong J."/>
            <person name="Han G."/>
            <person name="Jiang X."/>
            <person name="Wu R."/>
            <person name="Zou H."/>
        </authorList>
    </citation>
    <scope>PHOSPHORYLATION [LARGE SCALE ANALYSIS] AT SER-94</scope>
    <scope>IDENTIFICATION BY MASS SPECTROMETRY [LARGE SCALE ANALYSIS]</scope>
    <source>
        <tissue>Liver</tissue>
    </source>
</reference>
<reference key="5">
    <citation type="journal article" date="2010" name="Cell">
        <title>A tissue-specific atlas of mouse protein phosphorylation and expression.</title>
        <authorList>
            <person name="Huttlin E.L."/>
            <person name="Jedrychowski M.P."/>
            <person name="Elias J.E."/>
            <person name="Goswami T."/>
            <person name="Rad R."/>
            <person name="Beausoleil S.A."/>
            <person name="Villen J."/>
            <person name="Haas W."/>
            <person name="Sowa M.E."/>
            <person name="Gygi S.P."/>
        </authorList>
    </citation>
    <scope>PHOSPHORYLATION [LARGE SCALE ANALYSIS] AT THR-21; SER-23 AND SER-803</scope>
    <scope>IDENTIFICATION BY MASS SPECTROMETRY [LARGE SCALE ANALYSIS]</scope>
    <source>
        <tissue>Kidney</tissue>
        <tissue>Liver</tissue>
        <tissue>Spleen</tissue>
    </source>
</reference>
<accession>Q9JLF6</accession>
<accession>Q8R0T9</accession>
<name>TGM1_MOUSE</name>
<organism>
    <name type="scientific">Mus musculus</name>
    <name type="common">Mouse</name>
    <dbReference type="NCBI Taxonomy" id="10090"/>
    <lineage>
        <taxon>Eukaryota</taxon>
        <taxon>Metazoa</taxon>
        <taxon>Chordata</taxon>
        <taxon>Craniata</taxon>
        <taxon>Vertebrata</taxon>
        <taxon>Euteleostomi</taxon>
        <taxon>Mammalia</taxon>
        <taxon>Eutheria</taxon>
        <taxon>Euarchontoglires</taxon>
        <taxon>Glires</taxon>
        <taxon>Rodentia</taxon>
        <taxon>Myomorpha</taxon>
        <taxon>Muroidea</taxon>
        <taxon>Muridae</taxon>
        <taxon>Murinae</taxon>
        <taxon>Mus</taxon>
        <taxon>Mus</taxon>
    </lineage>
</organism>
<evidence type="ECO:0000250" key="1"/>
<evidence type="ECO:0000250" key="2">
    <source>
        <dbReference type="UniProtKB" id="P22735"/>
    </source>
</evidence>
<evidence type="ECO:0000250" key="3">
    <source>
        <dbReference type="UniProtKB" id="P23606"/>
    </source>
</evidence>
<evidence type="ECO:0000255" key="4">
    <source>
        <dbReference type="PROSITE-ProRule" id="PRU10024"/>
    </source>
</evidence>
<evidence type="ECO:0000256" key="5">
    <source>
        <dbReference type="SAM" id="MobiDB-lite"/>
    </source>
</evidence>
<evidence type="ECO:0000269" key="6">
    <source>
    </source>
</evidence>
<evidence type="ECO:0000305" key="7"/>
<evidence type="ECO:0007744" key="8">
    <source>
    </source>
</evidence>
<evidence type="ECO:0007744" key="9">
    <source>
    </source>
</evidence>
<evidence type="ECO:0007744" key="10">
    <source>
    </source>
</evidence>
<proteinExistence type="evidence at protein level"/>
<keyword id="KW-0012">Acyltransferase</keyword>
<keyword id="KW-0106">Calcium</keyword>
<keyword id="KW-0417">Keratinization</keyword>
<keyword id="KW-0449">Lipoprotein</keyword>
<keyword id="KW-0472">Membrane</keyword>
<keyword id="KW-0479">Metal-binding</keyword>
<keyword id="KW-0564">Palmitate</keyword>
<keyword id="KW-0597">Phosphoprotein</keyword>
<keyword id="KW-1185">Reference proteome</keyword>
<keyword id="KW-0808">Transferase</keyword>
<gene>
    <name type="primary">Tgm1</name>
</gene>